<proteinExistence type="inferred from homology"/>
<evidence type="ECO:0000255" key="1">
    <source>
        <dbReference type="HAMAP-Rule" id="MF_01342"/>
    </source>
</evidence>
<evidence type="ECO:0000305" key="2"/>
<name>RL16_CHLPB</name>
<feature type="chain" id="PRO_1000142944" description="Large ribosomal subunit protein uL16">
    <location>
        <begin position="1"/>
        <end position="139"/>
    </location>
</feature>
<protein>
    <recommendedName>
        <fullName evidence="1">Large ribosomal subunit protein uL16</fullName>
    </recommendedName>
    <alternativeName>
        <fullName evidence="2">50S ribosomal protein L16</fullName>
    </alternativeName>
</protein>
<reference key="1">
    <citation type="submission" date="2008-06" db="EMBL/GenBank/DDBJ databases">
        <title>Complete sequence of Chlorobium phaeobacteroides BS1.</title>
        <authorList>
            <consortium name="US DOE Joint Genome Institute"/>
            <person name="Lucas S."/>
            <person name="Copeland A."/>
            <person name="Lapidus A."/>
            <person name="Glavina del Rio T."/>
            <person name="Dalin E."/>
            <person name="Tice H."/>
            <person name="Bruce D."/>
            <person name="Goodwin L."/>
            <person name="Pitluck S."/>
            <person name="Schmutz J."/>
            <person name="Larimer F."/>
            <person name="Land M."/>
            <person name="Hauser L."/>
            <person name="Kyrpides N."/>
            <person name="Ovchinnikova G."/>
            <person name="Li T."/>
            <person name="Liu Z."/>
            <person name="Zhao F."/>
            <person name="Overmann J."/>
            <person name="Bryant D.A."/>
            <person name="Richardson P."/>
        </authorList>
    </citation>
    <scope>NUCLEOTIDE SEQUENCE [LARGE SCALE GENOMIC DNA]</scope>
    <source>
        <strain>BS1</strain>
    </source>
</reference>
<gene>
    <name evidence="1" type="primary">rplP</name>
    <name type="ordered locus">Cphamn1_2289</name>
</gene>
<sequence>MLMPKRVKYRKVQRGRMKGDAQRGTTISFGSYGLKALEPAWITNRQIEAARIAMNRYMKRDGKIWIRIFPDKPVTKKAAETRMGSGKGSPEFWVSVVKPGRIMFEADGVPLDVATEAFRLAAKKLPIKTKFIVRPDLEG</sequence>
<organism>
    <name type="scientific">Chlorobium phaeobacteroides (strain BS1)</name>
    <dbReference type="NCBI Taxonomy" id="331678"/>
    <lineage>
        <taxon>Bacteria</taxon>
        <taxon>Pseudomonadati</taxon>
        <taxon>Chlorobiota</taxon>
        <taxon>Chlorobiia</taxon>
        <taxon>Chlorobiales</taxon>
        <taxon>Chlorobiaceae</taxon>
        <taxon>Chlorobium/Pelodictyon group</taxon>
        <taxon>Chlorobium</taxon>
    </lineage>
</organism>
<dbReference type="EMBL" id="CP001101">
    <property type="protein sequence ID" value="ACE05193.1"/>
    <property type="molecule type" value="Genomic_DNA"/>
</dbReference>
<dbReference type="SMR" id="B3EP54"/>
<dbReference type="STRING" id="331678.Cphamn1_2289"/>
<dbReference type="KEGG" id="cpb:Cphamn1_2289"/>
<dbReference type="eggNOG" id="COG0197">
    <property type="taxonomic scope" value="Bacteria"/>
</dbReference>
<dbReference type="HOGENOM" id="CLU_078858_2_1_10"/>
<dbReference type="OrthoDB" id="9802589at2"/>
<dbReference type="GO" id="GO:0022625">
    <property type="term" value="C:cytosolic large ribosomal subunit"/>
    <property type="evidence" value="ECO:0007669"/>
    <property type="project" value="TreeGrafter"/>
</dbReference>
<dbReference type="GO" id="GO:0019843">
    <property type="term" value="F:rRNA binding"/>
    <property type="evidence" value="ECO:0007669"/>
    <property type="project" value="UniProtKB-UniRule"/>
</dbReference>
<dbReference type="GO" id="GO:0003735">
    <property type="term" value="F:structural constituent of ribosome"/>
    <property type="evidence" value="ECO:0007669"/>
    <property type="project" value="InterPro"/>
</dbReference>
<dbReference type="GO" id="GO:0000049">
    <property type="term" value="F:tRNA binding"/>
    <property type="evidence" value="ECO:0007669"/>
    <property type="project" value="UniProtKB-KW"/>
</dbReference>
<dbReference type="GO" id="GO:0006412">
    <property type="term" value="P:translation"/>
    <property type="evidence" value="ECO:0007669"/>
    <property type="project" value="UniProtKB-UniRule"/>
</dbReference>
<dbReference type="CDD" id="cd01433">
    <property type="entry name" value="Ribosomal_L16_L10e"/>
    <property type="match status" value="1"/>
</dbReference>
<dbReference type="FunFam" id="3.90.1170.10:FF:000001">
    <property type="entry name" value="50S ribosomal protein L16"/>
    <property type="match status" value="1"/>
</dbReference>
<dbReference type="Gene3D" id="3.90.1170.10">
    <property type="entry name" value="Ribosomal protein L10e/L16"/>
    <property type="match status" value="1"/>
</dbReference>
<dbReference type="HAMAP" id="MF_01342">
    <property type="entry name" value="Ribosomal_uL16"/>
    <property type="match status" value="1"/>
</dbReference>
<dbReference type="InterPro" id="IPR047873">
    <property type="entry name" value="Ribosomal_uL16"/>
</dbReference>
<dbReference type="InterPro" id="IPR000114">
    <property type="entry name" value="Ribosomal_uL16_bact-type"/>
</dbReference>
<dbReference type="InterPro" id="IPR020798">
    <property type="entry name" value="Ribosomal_uL16_CS"/>
</dbReference>
<dbReference type="InterPro" id="IPR016180">
    <property type="entry name" value="Ribosomal_uL16_dom"/>
</dbReference>
<dbReference type="InterPro" id="IPR036920">
    <property type="entry name" value="Ribosomal_uL16_sf"/>
</dbReference>
<dbReference type="NCBIfam" id="TIGR01164">
    <property type="entry name" value="rplP_bact"/>
    <property type="match status" value="1"/>
</dbReference>
<dbReference type="PANTHER" id="PTHR12220">
    <property type="entry name" value="50S/60S RIBOSOMAL PROTEIN L16"/>
    <property type="match status" value="1"/>
</dbReference>
<dbReference type="PANTHER" id="PTHR12220:SF13">
    <property type="entry name" value="LARGE RIBOSOMAL SUBUNIT PROTEIN UL16M"/>
    <property type="match status" value="1"/>
</dbReference>
<dbReference type="Pfam" id="PF00252">
    <property type="entry name" value="Ribosomal_L16"/>
    <property type="match status" value="1"/>
</dbReference>
<dbReference type="PRINTS" id="PR00060">
    <property type="entry name" value="RIBOSOMALL16"/>
</dbReference>
<dbReference type="SUPFAM" id="SSF54686">
    <property type="entry name" value="Ribosomal protein L16p/L10e"/>
    <property type="match status" value="1"/>
</dbReference>
<dbReference type="PROSITE" id="PS00586">
    <property type="entry name" value="RIBOSOMAL_L16_1"/>
    <property type="match status" value="1"/>
</dbReference>
<dbReference type="PROSITE" id="PS00701">
    <property type="entry name" value="RIBOSOMAL_L16_2"/>
    <property type="match status" value="1"/>
</dbReference>
<comment type="function">
    <text evidence="1">Binds 23S rRNA and is also seen to make contacts with the A and possibly P site tRNAs.</text>
</comment>
<comment type="subunit">
    <text evidence="1">Part of the 50S ribosomal subunit.</text>
</comment>
<comment type="similarity">
    <text evidence="1">Belongs to the universal ribosomal protein uL16 family.</text>
</comment>
<accession>B3EP54</accession>
<keyword id="KW-0687">Ribonucleoprotein</keyword>
<keyword id="KW-0689">Ribosomal protein</keyword>
<keyword id="KW-0694">RNA-binding</keyword>
<keyword id="KW-0699">rRNA-binding</keyword>
<keyword id="KW-0820">tRNA-binding</keyword>